<gene>
    <name evidence="1" type="primary">mraY</name>
    <name type="ordered locus">SPO1184</name>
</gene>
<accession>Q5LU74</accession>
<evidence type="ECO:0000255" key="1">
    <source>
        <dbReference type="HAMAP-Rule" id="MF_00038"/>
    </source>
</evidence>
<proteinExistence type="inferred from homology"/>
<name>MRAY_RUEPO</name>
<sequence>MLYWLTALSDGGDVWNLFRYITFRAGGAFMTALIFGFLFGRPLINVLRRKQGKGQPIRDDGPEGHFSKAGTPTMGGLLIVGALLTSTLLWARWDNPFVWMVLFVTLAYALIGFADDYAKVSKQNTKGVSGKMRLALGVIIAVIAALWASYNHPAELQNQLALPVFKDTLINLGLLYVPFAICVIVGSANAVNLTDGLDGLAIMPAMIAASTLGVIAYAVGRVDFTEYLDVHYVPGTGEILIFTAALFGAGLGFLWYNAPPAAVFMGDTGSLALGGALGAIAVATKHELVLAIVGGLFVVEALSVIIQVLYFKRTGKRVFLMAPIHHHYEKKGWAEPTIVIRFWIISLILAMIGLATLKVR</sequence>
<keyword id="KW-0131">Cell cycle</keyword>
<keyword id="KW-0132">Cell division</keyword>
<keyword id="KW-0997">Cell inner membrane</keyword>
<keyword id="KW-1003">Cell membrane</keyword>
<keyword id="KW-0133">Cell shape</keyword>
<keyword id="KW-0961">Cell wall biogenesis/degradation</keyword>
<keyword id="KW-0460">Magnesium</keyword>
<keyword id="KW-0472">Membrane</keyword>
<keyword id="KW-0479">Metal-binding</keyword>
<keyword id="KW-0573">Peptidoglycan synthesis</keyword>
<keyword id="KW-1185">Reference proteome</keyword>
<keyword id="KW-0808">Transferase</keyword>
<keyword id="KW-0812">Transmembrane</keyword>
<keyword id="KW-1133">Transmembrane helix</keyword>
<reference key="1">
    <citation type="journal article" date="2004" name="Nature">
        <title>Genome sequence of Silicibacter pomeroyi reveals adaptations to the marine environment.</title>
        <authorList>
            <person name="Moran M.A."/>
            <person name="Buchan A."/>
            <person name="Gonzalez J.M."/>
            <person name="Heidelberg J.F."/>
            <person name="Whitman W.B."/>
            <person name="Kiene R.P."/>
            <person name="Henriksen J.R."/>
            <person name="King G.M."/>
            <person name="Belas R."/>
            <person name="Fuqua C."/>
            <person name="Brinkac L.M."/>
            <person name="Lewis M."/>
            <person name="Johri S."/>
            <person name="Weaver B."/>
            <person name="Pai G."/>
            <person name="Eisen J.A."/>
            <person name="Rahe E."/>
            <person name="Sheldon W.M."/>
            <person name="Ye W."/>
            <person name="Miller T.R."/>
            <person name="Carlton J."/>
            <person name="Rasko D.A."/>
            <person name="Paulsen I.T."/>
            <person name="Ren Q."/>
            <person name="Daugherty S.C."/>
            <person name="DeBoy R.T."/>
            <person name="Dodson R.J."/>
            <person name="Durkin A.S."/>
            <person name="Madupu R."/>
            <person name="Nelson W.C."/>
            <person name="Sullivan S.A."/>
            <person name="Rosovitz M.J."/>
            <person name="Haft D.H."/>
            <person name="Selengut J."/>
            <person name="Ward N."/>
        </authorList>
    </citation>
    <scope>NUCLEOTIDE SEQUENCE [LARGE SCALE GENOMIC DNA]</scope>
    <source>
        <strain>ATCC 700808 / DSM 15171 / DSS-3</strain>
    </source>
</reference>
<reference key="2">
    <citation type="journal article" date="2014" name="Stand. Genomic Sci.">
        <title>An updated genome annotation for the model marine bacterium Ruegeria pomeroyi DSS-3.</title>
        <authorList>
            <person name="Rivers A.R."/>
            <person name="Smith C.B."/>
            <person name="Moran M.A."/>
        </authorList>
    </citation>
    <scope>GENOME REANNOTATION</scope>
    <source>
        <strain>ATCC 700808 / DSM 15171 / DSS-3</strain>
    </source>
</reference>
<comment type="function">
    <text evidence="1">Catalyzes the initial step of the lipid cycle reactions in the biosynthesis of the cell wall peptidoglycan: transfers peptidoglycan precursor phospho-MurNAc-pentapeptide from UDP-MurNAc-pentapeptide onto the lipid carrier undecaprenyl phosphate, yielding undecaprenyl-pyrophosphoryl-MurNAc-pentapeptide, known as lipid I.</text>
</comment>
<comment type="catalytic activity">
    <reaction evidence="1">
        <text>UDP-N-acetyl-alpha-D-muramoyl-L-alanyl-gamma-D-glutamyl-meso-2,6-diaminopimeloyl-D-alanyl-D-alanine + di-trans,octa-cis-undecaprenyl phosphate = di-trans,octa-cis-undecaprenyl diphospho-N-acetyl-alpha-D-muramoyl-L-alanyl-D-glutamyl-meso-2,6-diaminopimeloyl-D-alanyl-D-alanine + UMP</text>
        <dbReference type="Rhea" id="RHEA:28386"/>
        <dbReference type="ChEBI" id="CHEBI:57865"/>
        <dbReference type="ChEBI" id="CHEBI:60392"/>
        <dbReference type="ChEBI" id="CHEBI:61386"/>
        <dbReference type="ChEBI" id="CHEBI:61387"/>
        <dbReference type="EC" id="2.7.8.13"/>
    </reaction>
</comment>
<comment type="cofactor">
    <cofactor evidence="1">
        <name>Mg(2+)</name>
        <dbReference type="ChEBI" id="CHEBI:18420"/>
    </cofactor>
</comment>
<comment type="pathway">
    <text evidence="1">Cell wall biogenesis; peptidoglycan biosynthesis.</text>
</comment>
<comment type="subcellular location">
    <subcellularLocation>
        <location evidence="1">Cell inner membrane</location>
        <topology evidence="1">Multi-pass membrane protein</topology>
    </subcellularLocation>
</comment>
<comment type="similarity">
    <text evidence="1">Belongs to the glycosyltransferase 4 family. MraY subfamily.</text>
</comment>
<dbReference type="EC" id="2.7.8.13" evidence="1"/>
<dbReference type="EMBL" id="CP000031">
    <property type="protein sequence ID" value="AAV94480.1"/>
    <property type="molecule type" value="Genomic_DNA"/>
</dbReference>
<dbReference type="RefSeq" id="WP_011046927.1">
    <property type="nucleotide sequence ID" value="NC_003911.12"/>
</dbReference>
<dbReference type="SMR" id="Q5LU74"/>
<dbReference type="STRING" id="246200.SPO1184"/>
<dbReference type="PaxDb" id="246200-SPO1184"/>
<dbReference type="KEGG" id="sil:SPO1184"/>
<dbReference type="eggNOG" id="COG0472">
    <property type="taxonomic scope" value="Bacteria"/>
</dbReference>
<dbReference type="HOGENOM" id="CLU_023982_0_0_5"/>
<dbReference type="OrthoDB" id="9805475at2"/>
<dbReference type="UniPathway" id="UPA00219"/>
<dbReference type="Proteomes" id="UP000001023">
    <property type="component" value="Chromosome"/>
</dbReference>
<dbReference type="GO" id="GO:0005886">
    <property type="term" value="C:plasma membrane"/>
    <property type="evidence" value="ECO:0007669"/>
    <property type="project" value="UniProtKB-SubCell"/>
</dbReference>
<dbReference type="GO" id="GO:0046872">
    <property type="term" value="F:metal ion binding"/>
    <property type="evidence" value="ECO:0007669"/>
    <property type="project" value="UniProtKB-KW"/>
</dbReference>
<dbReference type="GO" id="GO:0008963">
    <property type="term" value="F:phospho-N-acetylmuramoyl-pentapeptide-transferase activity"/>
    <property type="evidence" value="ECO:0007669"/>
    <property type="project" value="UniProtKB-UniRule"/>
</dbReference>
<dbReference type="GO" id="GO:0051992">
    <property type="term" value="F:UDP-N-acetylmuramoyl-L-alanyl-D-glutamyl-meso-2,6-diaminopimelyl-D-alanyl-D-alanine:undecaprenyl-phosphate transferase activity"/>
    <property type="evidence" value="ECO:0007669"/>
    <property type="project" value="RHEA"/>
</dbReference>
<dbReference type="GO" id="GO:0051301">
    <property type="term" value="P:cell division"/>
    <property type="evidence" value="ECO:0007669"/>
    <property type="project" value="UniProtKB-KW"/>
</dbReference>
<dbReference type="GO" id="GO:0071555">
    <property type="term" value="P:cell wall organization"/>
    <property type="evidence" value="ECO:0007669"/>
    <property type="project" value="UniProtKB-KW"/>
</dbReference>
<dbReference type="GO" id="GO:0009252">
    <property type="term" value="P:peptidoglycan biosynthetic process"/>
    <property type="evidence" value="ECO:0007669"/>
    <property type="project" value="UniProtKB-UniRule"/>
</dbReference>
<dbReference type="GO" id="GO:0008360">
    <property type="term" value="P:regulation of cell shape"/>
    <property type="evidence" value="ECO:0007669"/>
    <property type="project" value="UniProtKB-KW"/>
</dbReference>
<dbReference type="CDD" id="cd06852">
    <property type="entry name" value="GT_MraY"/>
    <property type="match status" value="1"/>
</dbReference>
<dbReference type="HAMAP" id="MF_00038">
    <property type="entry name" value="MraY"/>
    <property type="match status" value="1"/>
</dbReference>
<dbReference type="InterPro" id="IPR000715">
    <property type="entry name" value="Glycosyl_transferase_4"/>
</dbReference>
<dbReference type="InterPro" id="IPR003524">
    <property type="entry name" value="PNAcMuramoyl-5peptid_Trfase"/>
</dbReference>
<dbReference type="InterPro" id="IPR018480">
    <property type="entry name" value="PNAcMuramoyl-5peptid_Trfase_CS"/>
</dbReference>
<dbReference type="NCBIfam" id="TIGR00445">
    <property type="entry name" value="mraY"/>
    <property type="match status" value="1"/>
</dbReference>
<dbReference type="PANTHER" id="PTHR22926">
    <property type="entry name" value="PHOSPHO-N-ACETYLMURAMOYL-PENTAPEPTIDE-TRANSFERASE"/>
    <property type="match status" value="1"/>
</dbReference>
<dbReference type="PANTHER" id="PTHR22926:SF5">
    <property type="entry name" value="PHOSPHO-N-ACETYLMURAMOYL-PENTAPEPTIDE-TRANSFERASE HOMOLOG"/>
    <property type="match status" value="1"/>
</dbReference>
<dbReference type="Pfam" id="PF00953">
    <property type="entry name" value="Glycos_transf_4"/>
    <property type="match status" value="1"/>
</dbReference>
<dbReference type="Pfam" id="PF10555">
    <property type="entry name" value="MraY_sig1"/>
    <property type="match status" value="1"/>
</dbReference>
<dbReference type="PROSITE" id="PS01347">
    <property type="entry name" value="MRAY_1"/>
    <property type="match status" value="1"/>
</dbReference>
<dbReference type="PROSITE" id="PS01348">
    <property type="entry name" value="MRAY_2"/>
    <property type="match status" value="1"/>
</dbReference>
<protein>
    <recommendedName>
        <fullName evidence="1">Phospho-N-acetylmuramoyl-pentapeptide-transferase</fullName>
        <ecNumber evidence="1">2.7.8.13</ecNumber>
    </recommendedName>
    <alternativeName>
        <fullName evidence="1">UDP-MurNAc-pentapeptide phosphotransferase</fullName>
    </alternativeName>
</protein>
<feature type="chain" id="PRO_0000108889" description="Phospho-N-acetylmuramoyl-pentapeptide-transferase">
    <location>
        <begin position="1"/>
        <end position="360"/>
    </location>
</feature>
<feature type="transmembrane region" description="Helical" evidence="1">
    <location>
        <begin position="27"/>
        <end position="47"/>
    </location>
</feature>
<feature type="transmembrane region" description="Helical" evidence="1">
    <location>
        <begin position="71"/>
        <end position="91"/>
    </location>
</feature>
<feature type="transmembrane region" description="Helical" evidence="1">
    <location>
        <begin position="93"/>
        <end position="113"/>
    </location>
</feature>
<feature type="transmembrane region" description="Helical" evidence="1">
    <location>
        <begin position="134"/>
        <end position="154"/>
    </location>
</feature>
<feature type="transmembrane region" description="Helical" evidence="1">
    <location>
        <begin position="168"/>
        <end position="188"/>
    </location>
</feature>
<feature type="transmembrane region" description="Helical" evidence="1">
    <location>
        <begin position="199"/>
        <end position="219"/>
    </location>
</feature>
<feature type="transmembrane region" description="Helical" evidence="1">
    <location>
        <begin position="239"/>
        <end position="259"/>
    </location>
</feature>
<feature type="transmembrane region" description="Helical" evidence="1">
    <location>
        <begin position="262"/>
        <end position="282"/>
    </location>
</feature>
<feature type="transmembrane region" description="Helical" evidence="1">
    <location>
        <begin position="288"/>
        <end position="308"/>
    </location>
</feature>
<feature type="transmembrane region" description="Helical" evidence="1">
    <location>
        <begin position="337"/>
        <end position="357"/>
    </location>
</feature>
<organism>
    <name type="scientific">Ruegeria pomeroyi (strain ATCC 700808 / DSM 15171 / DSS-3)</name>
    <name type="common">Silicibacter pomeroyi</name>
    <dbReference type="NCBI Taxonomy" id="246200"/>
    <lineage>
        <taxon>Bacteria</taxon>
        <taxon>Pseudomonadati</taxon>
        <taxon>Pseudomonadota</taxon>
        <taxon>Alphaproteobacteria</taxon>
        <taxon>Rhodobacterales</taxon>
        <taxon>Roseobacteraceae</taxon>
        <taxon>Ruegeria</taxon>
    </lineage>
</organism>